<protein>
    <recommendedName>
        <fullName>Glutaredoxin-C11</fullName>
        <shortName>AtGrxC11</shortName>
    </recommendedName>
    <alternativeName>
        <fullName>Protein ROXY 4</fullName>
    </alternativeName>
</protein>
<sequence>MERIRDLSSKKAAVIFTKSSCCMCHSIKTLFYELGASPAIHELDKDPEGREMERALRALGSSNPAVPAVFVGGRYIGSAKDIISFHVDGSLKQMLKDAKAIWL</sequence>
<accession>Q9LYC6</accession>
<accession>C1JGP5</accession>
<name>GRC11_ARATH</name>
<comment type="function">
    <text evidence="1">Has a glutathione-disulfide oxidoreductase activity in the presence of NADPH and glutathione reductase. Reduces low molecular weight disulfides and proteins (By similarity).</text>
</comment>
<comment type="subcellular location">
    <subcellularLocation>
        <location evidence="1">Cytoplasm</location>
    </subcellularLocation>
</comment>
<comment type="similarity">
    <text evidence="3">Belongs to the glutaredoxin family. CC-type subfamily.</text>
</comment>
<dbReference type="EMBL" id="FJ611904">
    <property type="protein sequence ID" value="ACO50409.1"/>
    <property type="molecule type" value="mRNA"/>
</dbReference>
<dbReference type="EMBL" id="AL163816">
    <property type="protein sequence ID" value="CAB87740.1"/>
    <property type="molecule type" value="Genomic_DNA"/>
</dbReference>
<dbReference type="EMBL" id="CP002686">
    <property type="protein sequence ID" value="AEE80416.1"/>
    <property type="molecule type" value="Genomic_DNA"/>
</dbReference>
<dbReference type="EMBL" id="BT015060">
    <property type="protein sequence ID" value="AAT71932.1"/>
    <property type="molecule type" value="mRNA"/>
</dbReference>
<dbReference type="EMBL" id="BT015647">
    <property type="protein sequence ID" value="AAU15146.1"/>
    <property type="molecule type" value="mRNA"/>
</dbReference>
<dbReference type="PIR" id="T48084">
    <property type="entry name" value="T48084"/>
</dbReference>
<dbReference type="RefSeq" id="NP_191854.1">
    <property type="nucleotide sequence ID" value="NM_116160.3"/>
</dbReference>
<dbReference type="SMR" id="Q9LYC6"/>
<dbReference type="BioGRID" id="10784">
    <property type="interactions" value="1"/>
</dbReference>
<dbReference type="FunCoup" id="Q9LYC6">
    <property type="interactions" value="30"/>
</dbReference>
<dbReference type="STRING" id="3702.Q9LYC6"/>
<dbReference type="PaxDb" id="3702-AT3G62950.1"/>
<dbReference type="EnsemblPlants" id="AT3G62950.1">
    <property type="protein sequence ID" value="AT3G62950.1"/>
    <property type="gene ID" value="AT3G62950"/>
</dbReference>
<dbReference type="GeneID" id="825470"/>
<dbReference type="Gramene" id="AT3G62950.1">
    <property type="protein sequence ID" value="AT3G62950.1"/>
    <property type="gene ID" value="AT3G62950"/>
</dbReference>
<dbReference type="KEGG" id="ath:AT3G62950"/>
<dbReference type="Araport" id="AT3G62950"/>
<dbReference type="TAIR" id="AT3G62950">
    <property type="gene designation" value="GRXC11"/>
</dbReference>
<dbReference type="eggNOG" id="KOG1752">
    <property type="taxonomic scope" value="Eukaryota"/>
</dbReference>
<dbReference type="HOGENOM" id="CLU_026126_6_0_1"/>
<dbReference type="InParanoid" id="Q9LYC6"/>
<dbReference type="OMA" id="CICHSIR"/>
<dbReference type="OrthoDB" id="418495at2759"/>
<dbReference type="PhylomeDB" id="Q9LYC6"/>
<dbReference type="PRO" id="PR:Q9LYC6"/>
<dbReference type="Proteomes" id="UP000006548">
    <property type="component" value="Chromosome 3"/>
</dbReference>
<dbReference type="ExpressionAtlas" id="Q9LYC6">
    <property type="expression patterns" value="baseline and differential"/>
</dbReference>
<dbReference type="GO" id="GO:0005737">
    <property type="term" value="C:cytoplasm"/>
    <property type="evidence" value="ECO:0007669"/>
    <property type="project" value="UniProtKB-SubCell"/>
</dbReference>
<dbReference type="GO" id="GO:0000122">
    <property type="term" value="P:negative regulation of transcription by RNA polymerase II"/>
    <property type="evidence" value="ECO:0000314"/>
    <property type="project" value="TAIR"/>
</dbReference>
<dbReference type="GO" id="GO:0010167">
    <property type="term" value="P:response to nitrate"/>
    <property type="evidence" value="ECO:0000270"/>
    <property type="project" value="TAIR"/>
</dbReference>
<dbReference type="CDD" id="cd03419">
    <property type="entry name" value="GRX_GRXh_1_2_like"/>
    <property type="match status" value="1"/>
</dbReference>
<dbReference type="FunFam" id="3.40.30.10:FF:000028">
    <property type="entry name" value="Glutaredoxin family protein"/>
    <property type="match status" value="1"/>
</dbReference>
<dbReference type="Gene3D" id="3.40.30.10">
    <property type="entry name" value="Glutaredoxin"/>
    <property type="match status" value="1"/>
</dbReference>
<dbReference type="InterPro" id="IPR011905">
    <property type="entry name" value="GlrX-like_pln_2"/>
</dbReference>
<dbReference type="InterPro" id="IPR002109">
    <property type="entry name" value="Glutaredoxin"/>
</dbReference>
<dbReference type="InterPro" id="IPR014025">
    <property type="entry name" value="Glutaredoxin_subgr"/>
</dbReference>
<dbReference type="InterPro" id="IPR036249">
    <property type="entry name" value="Thioredoxin-like_sf"/>
</dbReference>
<dbReference type="NCBIfam" id="TIGR02189">
    <property type="entry name" value="GlrX-like_plant"/>
    <property type="match status" value="1"/>
</dbReference>
<dbReference type="PANTHER" id="PTHR10168">
    <property type="entry name" value="GLUTAREDOXIN"/>
    <property type="match status" value="1"/>
</dbReference>
<dbReference type="Pfam" id="PF00462">
    <property type="entry name" value="Glutaredoxin"/>
    <property type="match status" value="1"/>
</dbReference>
<dbReference type="PRINTS" id="PR00160">
    <property type="entry name" value="GLUTAREDOXIN"/>
</dbReference>
<dbReference type="SUPFAM" id="SSF52833">
    <property type="entry name" value="Thioredoxin-like"/>
    <property type="match status" value="1"/>
</dbReference>
<dbReference type="PROSITE" id="PS51354">
    <property type="entry name" value="GLUTAREDOXIN_2"/>
    <property type="match status" value="1"/>
</dbReference>
<feature type="chain" id="PRO_0000268718" description="Glutaredoxin-C11">
    <location>
        <begin position="1"/>
        <end position="103"/>
    </location>
</feature>
<feature type="domain" description="Glutaredoxin" evidence="2">
    <location>
        <begin position="1"/>
        <end position="102"/>
    </location>
</feature>
<feature type="disulfide bond" description="Redox-active" evidence="1">
    <location>
        <begin position="21"/>
        <end position="24"/>
    </location>
</feature>
<gene>
    <name type="primary">GRXC11</name>
    <name type="synonym">ROXY4</name>
    <name type="ordered locus">At3g62950</name>
    <name type="ORF">T20O10.50</name>
</gene>
<reference key="1">
    <citation type="journal article" date="2009" name="Plant Cell">
        <title>Nuclear activity of ROXY1, a glutaredoxin interacting with TGA factors, is required for petal development in Arabidopsis thaliana.</title>
        <authorList>
            <person name="Li S."/>
            <person name="Lauri A."/>
            <person name="Ziemann M."/>
            <person name="Busch A."/>
            <person name="Bhave M."/>
            <person name="Zachgo S."/>
        </authorList>
    </citation>
    <scope>NUCLEOTIDE SEQUENCE [MRNA]</scope>
    <scope>GENE FAMILY</scope>
</reference>
<reference key="2">
    <citation type="journal article" date="2000" name="Nature">
        <title>Sequence and analysis of chromosome 3 of the plant Arabidopsis thaliana.</title>
        <authorList>
            <person name="Salanoubat M."/>
            <person name="Lemcke K."/>
            <person name="Rieger M."/>
            <person name="Ansorge W."/>
            <person name="Unseld M."/>
            <person name="Fartmann B."/>
            <person name="Valle G."/>
            <person name="Bloecker H."/>
            <person name="Perez-Alonso M."/>
            <person name="Obermaier B."/>
            <person name="Delseny M."/>
            <person name="Boutry M."/>
            <person name="Grivell L.A."/>
            <person name="Mache R."/>
            <person name="Puigdomenech P."/>
            <person name="De Simone V."/>
            <person name="Choisne N."/>
            <person name="Artiguenave F."/>
            <person name="Robert C."/>
            <person name="Brottier P."/>
            <person name="Wincker P."/>
            <person name="Cattolico L."/>
            <person name="Weissenbach J."/>
            <person name="Saurin W."/>
            <person name="Quetier F."/>
            <person name="Schaefer M."/>
            <person name="Mueller-Auer S."/>
            <person name="Gabel C."/>
            <person name="Fuchs M."/>
            <person name="Benes V."/>
            <person name="Wurmbach E."/>
            <person name="Drzonek H."/>
            <person name="Erfle H."/>
            <person name="Jordan N."/>
            <person name="Bangert S."/>
            <person name="Wiedelmann R."/>
            <person name="Kranz H."/>
            <person name="Voss H."/>
            <person name="Holland R."/>
            <person name="Brandt P."/>
            <person name="Nyakatura G."/>
            <person name="Vezzi A."/>
            <person name="D'Angelo M."/>
            <person name="Pallavicini A."/>
            <person name="Toppo S."/>
            <person name="Simionati B."/>
            <person name="Conrad A."/>
            <person name="Hornischer K."/>
            <person name="Kauer G."/>
            <person name="Loehnert T.-H."/>
            <person name="Nordsiek G."/>
            <person name="Reichelt J."/>
            <person name="Scharfe M."/>
            <person name="Schoen O."/>
            <person name="Bargues M."/>
            <person name="Terol J."/>
            <person name="Climent J."/>
            <person name="Navarro P."/>
            <person name="Collado C."/>
            <person name="Perez-Perez A."/>
            <person name="Ottenwaelder B."/>
            <person name="Duchemin D."/>
            <person name="Cooke R."/>
            <person name="Laudie M."/>
            <person name="Berger-Llauro C."/>
            <person name="Purnelle B."/>
            <person name="Masuy D."/>
            <person name="de Haan M."/>
            <person name="Maarse A.C."/>
            <person name="Alcaraz J.-P."/>
            <person name="Cottet A."/>
            <person name="Casacuberta E."/>
            <person name="Monfort A."/>
            <person name="Argiriou A."/>
            <person name="Flores M."/>
            <person name="Liguori R."/>
            <person name="Vitale D."/>
            <person name="Mannhaupt G."/>
            <person name="Haase D."/>
            <person name="Schoof H."/>
            <person name="Rudd S."/>
            <person name="Zaccaria P."/>
            <person name="Mewes H.-W."/>
            <person name="Mayer K.F.X."/>
            <person name="Kaul S."/>
            <person name="Town C.D."/>
            <person name="Koo H.L."/>
            <person name="Tallon L.J."/>
            <person name="Jenkins J."/>
            <person name="Rooney T."/>
            <person name="Rizzo M."/>
            <person name="Walts A."/>
            <person name="Utterback T."/>
            <person name="Fujii C.Y."/>
            <person name="Shea T.P."/>
            <person name="Creasy T.H."/>
            <person name="Haas B."/>
            <person name="Maiti R."/>
            <person name="Wu D."/>
            <person name="Peterson J."/>
            <person name="Van Aken S."/>
            <person name="Pai G."/>
            <person name="Militscher J."/>
            <person name="Sellers P."/>
            <person name="Gill J.E."/>
            <person name="Feldblyum T.V."/>
            <person name="Preuss D."/>
            <person name="Lin X."/>
            <person name="Nierman W.C."/>
            <person name="Salzberg S.L."/>
            <person name="White O."/>
            <person name="Venter J.C."/>
            <person name="Fraser C.M."/>
            <person name="Kaneko T."/>
            <person name="Nakamura Y."/>
            <person name="Sato S."/>
            <person name="Kato T."/>
            <person name="Asamizu E."/>
            <person name="Sasamoto S."/>
            <person name="Kimura T."/>
            <person name="Idesawa K."/>
            <person name="Kawashima K."/>
            <person name="Kishida Y."/>
            <person name="Kiyokawa C."/>
            <person name="Kohara M."/>
            <person name="Matsumoto M."/>
            <person name="Matsuno A."/>
            <person name="Muraki A."/>
            <person name="Nakayama S."/>
            <person name="Nakazaki N."/>
            <person name="Shinpo S."/>
            <person name="Takeuchi C."/>
            <person name="Wada T."/>
            <person name="Watanabe A."/>
            <person name="Yamada M."/>
            <person name="Yasuda M."/>
            <person name="Tabata S."/>
        </authorList>
    </citation>
    <scope>NUCLEOTIDE SEQUENCE [LARGE SCALE GENOMIC DNA]</scope>
    <source>
        <strain>cv. Columbia</strain>
    </source>
</reference>
<reference key="3">
    <citation type="journal article" date="2017" name="Plant J.">
        <title>Araport11: a complete reannotation of the Arabidopsis thaliana reference genome.</title>
        <authorList>
            <person name="Cheng C.Y."/>
            <person name="Krishnakumar V."/>
            <person name="Chan A.P."/>
            <person name="Thibaud-Nissen F."/>
            <person name="Schobel S."/>
            <person name="Town C.D."/>
        </authorList>
    </citation>
    <scope>GENOME REANNOTATION</scope>
    <source>
        <strain>cv. Columbia</strain>
    </source>
</reference>
<reference key="4">
    <citation type="submission" date="2004-09" db="EMBL/GenBank/DDBJ databases">
        <title>Arabidopsis ORF clones.</title>
        <authorList>
            <person name="Cheuk R.F."/>
            <person name="Chen H."/>
            <person name="Kim C.J."/>
            <person name="Shinn P."/>
            <person name="Ecker J.R."/>
        </authorList>
    </citation>
    <scope>NUCLEOTIDE SEQUENCE [LARGE SCALE MRNA]</scope>
    <source>
        <strain>cv. Columbia</strain>
    </source>
</reference>
<reference key="5">
    <citation type="journal article" date="2004" name="Cell. Mol. Life Sci.">
        <title>Plant glutaredoxins: still mysterious reducing systems.</title>
        <authorList>
            <person name="Rouhier N."/>
            <person name="Gelhaye E."/>
            <person name="Jacquot J.-P."/>
        </authorList>
    </citation>
    <scope>GENE FAMILY</scope>
    <scope>NOMENCLATURE</scope>
</reference>
<reference key="6">
    <citation type="journal article" date="2006" name="J. Exp. Bot.">
        <title>Genome-wide analysis of plant glutaredoxin systems.</title>
        <authorList>
            <person name="Rouhier N."/>
            <person name="Couturier J."/>
            <person name="Jacquot J.-P."/>
        </authorList>
    </citation>
    <scope>GENE FAMILY</scope>
</reference>
<keyword id="KW-0963">Cytoplasm</keyword>
<keyword id="KW-1015">Disulfide bond</keyword>
<keyword id="KW-0249">Electron transport</keyword>
<keyword id="KW-0676">Redox-active center</keyword>
<keyword id="KW-1185">Reference proteome</keyword>
<keyword id="KW-0813">Transport</keyword>
<proteinExistence type="inferred from homology"/>
<organism>
    <name type="scientific">Arabidopsis thaliana</name>
    <name type="common">Mouse-ear cress</name>
    <dbReference type="NCBI Taxonomy" id="3702"/>
    <lineage>
        <taxon>Eukaryota</taxon>
        <taxon>Viridiplantae</taxon>
        <taxon>Streptophyta</taxon>
        <taxon>Embryophyta</taxon>
        <taxon>Tracheophyta</taxon>
        <taxon>Spermatophyta</taxon>
        <taxon>Magnoliopsida</taxon>
        <taxon>eudicotyledons</taxon>
        <taxon>Gunneridae</taxon>
        <taxon>Pentapetalae</taxon>
        <taxon>rosids</taxon>
        <taxon>malvids</taxon>
        <taxon>Brassicales</taxon>
        <taxon>Brassicaceae</taxon>
        <taxon>Camelineae</taxon>
        <taxon>Arabidopsis</taxon>
    </lineage>
</organism>
<evidence type="ECO:0000250" key="1"/>
<evidence type="ECO:0000255" key="2">
    <source>
        <dbReference type="PROSITE-ProRule" id="PRU00686"/>
    </source>
</evidence>
<evidence type="ECO:0000305" key="3"/>